<evidence type="ECO:0000250" key="1">
    <source>
        <dbReference type="UniProtKB" id="Q9PT61"/>
    </source>
</evidence>
<evidence type="ECO:0000250" key="2">
    <source>
        <dbReference type="UniProtKB" id="Q9PVM0"/>
    </source>
</evidence>
<evidence type="ECO:0000255" key="3">
    <source>
        <dbReference type="PROSITE-ProRule" id="PRU00108"/>
    </source>
</evidence>
<evidence type="ECO:0000256" key="4">
    <source>
        <dbReference type="SAM" id="MobiDB-lite"/>
    </source>
</evidence>
<evidence type="ECO:0000312" key="5">
    <source>
        <dbReference type="EMBL" id="CAJ83418.1"/>
    </source>
</evidence>
<dbReference type="EMBL" id="CR848167">
    <property type="protein sequence ID" value="CAJ83418.1"/>
    <property type="molecule type" value="mRNA"/>
</dbReference>
<dbReference type="RefSeq" id="NP_001016021.1">
    <property type="nucleotide sequence ID" value="NM_001016021.2"/>
</dbReference>
<dbReference type="RefSeq" id="XP_012823813.1">
    <property type="nucleotide sequence ID" value="XM_012968359.1"/>
</dbReference>
<dbReference type="BMRB" id="Q28EM7"/>
<dbReference type="SMR" id="Q28EM7"/>
<dbReference type="STRING" id="8364.ENSXETP00000020226"/>
<dbReference type="PaxDb" id="8364-ENSXETP00000040682"/>
<dbReference type="GeneID" id="548775"/>
<dbReference type="KEGG" id="xtr:548775"/>
<dbReference type="AGR" id="Xenbase:XB-GENE-478452"/>
<dbReference type="CTD" id="1406"/>
<dbReference type="Xenbase" id="XB-GENE-478452">
    <property type="gene designation" value="crx"/>
</dbReference>
<dbReference type="eggNOG" id="KOG2251">
    <property type="taxonomic scope" value="Eukaryota"/>
</dbReference>
<dbReference type="InParanoid" id="Q28EM7"/>
<dbReference type="OMA" id="CMQRSTG"/>
<dbReference type="OrthoDB" id="6159439at2759"/>
<dbReference type="Proteomes" id="UP000008143">
    <property type="component" value="Chromosome 8"/>
</dbReference>
<dbReference type="Bgee" id="ENSXETG00000018775">
    <property type="expression patterns" value="Expressed in gastrula and 9 other cell types or tissues"/>
</dbReference>
<dbReference type="GO" id="GO:0005634">
    <property type="term" value="C:nucleus"/>
    <property type="evidence" value="ECO:0000250"/>
    <property type="project" value="UniProtKB"/>
</dbReference>
<dbReference type="GO" id="GO:0003677">
    <property type="term" value="F:DNA binding"/>
    <property type="evidence" value="ECO:0007669"/>
    <property type="project" value="UniProtKB-KW"/>
</dbReference>
<dbReference type="GO" id="GO:0000981">
    <property type="term" value="F:DNA-binding transcription factor activity, RNA polymerase II-specific"/>
    <property type="evidence" value="ECO:0007669"/>
    <property type="project" value="InterPro"/>
</dbReference>
<dbReference type="GO" id="GO:0009952">
    <property type="term" value="P:anterior/posterior pattern specification"/>
    <property type="evidence" value="ECO:0000250"/>
    <property type="project" value="UniProtKB"/>
</dbReference>
<dbReference type="GO" id="GO:0042706">
    <property type="term" value="P:eye photoreceptor cell fate commitment"/>
    <property type="evidence" value="ECO:0000250"/>
    <property type="project" value="UniProtKB"/>
</dbReference>
<dbReference type="GO" id="GO:0045944">
    <property type="term" value="P:positive regulation of transcription by RNA polymerase II"/>
    <property type="evidence" value="ECO:0000250"/>
    <property type="project" value="UniProtKB"/>
</dbReference>
<dbReference type="CDD" id="cd00086">
    <property type="entry name" value="homeodomain"/>
    <property type="match status" value="1"/>
</dbReference>
<dbReference type="FunFam" id="1.10.10.60:FF:000142">
    <property type="entry name" value="homeobox protein OTX2 isoform X2"/>
    <property type="match status" value="1"/>
</dbReference>
<dbReference type="Gene3D" id="1.10.10.60">
    <property type="entry name" value="Homeodomain-like"/>
    <property type="match status" value="1"/>
</dbReference>
<dbReference type="InterPro" id="IPR001356">
    <property type="entry name" value="HD"/>
</dbReference>
<dbReference type="InterPro" id="IPR017970">
    <property type="entry name" value="Homeobox_CS"/>
</dbReference>
<dbReference type="InterPro" id="IPR009057">
    <property type="entry name" value="Homeodomain-like_sf"/>
</dbReference>
<dbReference type="InterPro" id="IPR003025">
    <property type="entry name" value="Otx_TF"/>
</dbReference>
<dbReference type="InterPro" id="IPR013851">
    <property type="entry name" value="Otx_TF_C"/>
</dbReference>
<dbReference type="PANTHER" id="PTHR45793:SF22">
    <property type="entry name" value="CONE-ROD HOMEOBOX PROTEIN"/>
    <property type="match status" value="1"/>
</dbReference>
<dbReference type="PANTHER" id="PTHR45793">
    <property type="entry name" value="HOMEOBOX PROTEIN"/>
    <property type="match status" value="1"/>
</dbReference>
<dbReference type="Pfam" id="PF00046">
    <property type="entry name" value="Homeodomain"/>
    <property type="match status" value="1"/>
</dbReference>
<dbReference type="Pfam" id="PF03529">
    <property type="entry name" value="TF_Otx"/>
    <property type="match status" value="1"/>
</dbReference>
<dbReference type="PRINTS" id="PR01255">
    <property type="entry name" value="OTXHOMEOBOX"/>
</dbReference>
<dbReference type="SMART" id="SM00389">
    <property type="entry name" value="HOX"/>
    <property type="match status" value="1"/>
</dbReference>
<dbReference type="SUPFAM" id="SSF46689">
    <property type="entry name" value="Homeodomain-like"/>
    <property type="match status" value="1"/>
</dbReference>
<dbReference type="PROSITE" id="PS00027">
    <property type="entry name" value="HOMEOBOX_1"/>
    <property type="match status" value="1"/>
</dbReference>
<dbReference type="PROSITE" id="PS50071">
    <property type="entry name" value="HOMEOBOX_2"/>
    <property type="match status" value="1"/>
</dbReference>
<protein>
    <recommendedName>
        <fullName>Homeobox protein otx5</fullName>
    </recommendedName>
    <alternativeName>
        <fullName>Orthodenticle homolog 5</fullName>
    </alternativeName>
</protein>
<organism>
    <name type="scientific">Xenopus tropicalis</name>
    <name type="common">Western clawed frog</name>
    <name type="synonym">Silurana tropicalis</name>
    <dbReference type="NCBI Taxonomy" id="8364"/>
    <lineage>
        <taxon>Eukaryota</taxon>
        <taxon>Metazoa</taxon>
        <taxon>Chordata</taxon>
        <taxon>Craniata</taxon>
        <taxon>Vertebrata</taxon>
        <taxon>Euteleostomi</taxon>
        <taxon>Amphibia</taxon>
        <taxon>Batrachia</taxon>
        <taxon>Anura</taxon>
        <taxon>Pipoidea</taxon>
        <taxon>Pipidae</taxon>
        <taxon>Xenopodinae</taxon>
        <taxon>Xenopus</taxon>
        <taxon>Silurana</taxon>
    </lineage>
</organism>
<keyword id="KW-0217">Developmental protein</keyword>
<keyword id="KW-0221">Differentiation</keyword>
<keyword id="KW-0238">DNA-binding</keyword>
<keyword id="KW-0371">Homeobox</keyword>
<keyword id="KW-0539">Nucleus</keyword>
<keyword id="KW-1185">Reference proteome</keyword>
<keyword id="KW-0804">Transcription</keyword>
<keyword id="KW-0805">Transcription regulation</keyword>
<comment type="function">
    <text evidence="1">Transcription factor involved in anterior and eye development. Promotes the differentiation of both rod and cone photoreceptors cells in the retina. Together with other retinal homeobox proteins, acts as an effector of a cellular clock which, depending on cell cycle progression, establishes the generation of distinct retinal neuronal cell types. Acts synergistically with nrl to activate the rhodopsin promoter. Promotes the formation of anterior regions and represses the formation of posterior structures during development (By similarity).</text>
</comment>
<comment type="subcellular location">
    <subcellularLocation>
        <location evidence="1 3">Nucleus</location>
    </subcellularLocation>
</comment>
<name>OTX5_XENTR</name>
<proteinExistence type="evidence at transcript level"/>
<accession>Q28EM7</accession>
<gene>
    <name evidence="2" type="primary">otx5</name>
    <name type="ORF">TGas127o03.1</name>
</gene>
<feature type="chain" id="PRO_0000283767" description="Homeobox protein otx5">
    <location>
        <begin position="1"/>
        <end position="290"/>
    </location>
</feature>
<feature type="DNA-binding region" description="Homeobox" evidence="3">
    <location>
        <begin position="38"/>
        <end position="97"/>
    </location>
</feature>
<feature type="region of interest" description="Disordered" evidence="4">
    <location>
        <begin position="93"/>
        <end position="144"/>
    </location>
</feature>
<feature type="compositionally biased region" description="Polar residues" evidence="4">
    <location>
        <begin position="94"/>
        <end position="103"/>
    </location>
</feature>
<feature type="compositionally biased region" description="Polar residues" evidence="4">
    <location>
        <begin position="116"/>
        <end position="129"/>
    </location>
</feature>
<sequence length="290" mass="31532">MMSYIKQPHYAVNGLTLAGTGMDLLHSAVGYPTTPRKQRRERTTFTRAQLDILEALFAKTRYPDIFMREEVALKINLPESRVQVWFKNRRAKCRQQQQQSTGQAKPRPAKKKTSPARETNSEASTNGQYSPPPPGTAVTPSSTASATVSIWSPASISPIPDPLSAATTPCMQRSAGYPMTYSQAPAYTQSYGGSSSYFTGLDCGSYLSPMHPQLSAPGATLSPIATPTMGSHLSQSPASLSAQGYGASSLGFTSVDCLDYKDQTASWKLNFNATDCLDYKDQSSWKFQVL</sequence>
<reference evidence="5" key="1">
    <citation type="submission" date="2006-10" db="EMBL/GenBank/DDBJ databases">
        <authorList>
            <consortium name="Sanger Xenopus tropicalis EST/cDNA project"/>
        </authorList>
    </citation>
    <scope>NUCLEOTIDE SEQUENCE [LARGE SCALE MRNA]</scope>
    <source>
        <tissue evidence="5">Gastrula</tissue>
    </source>
</reference>